<protein>
    <recommendedName>
        <fullName evidence="1">Ferredoxin--NADP reductase</fullName>
        <shortName evidence="1">FNR</shortName>
        <shortName evidence="1">Fd-NADP(+) reductase</shortName>
        <ecNumber evidence="1">1.18.1.2</ecNumber>
    </recommendedName>
</protein>
<comment type="catalytic activity">
    <reaction evidence="1">
        <text>2 reduced [2Fe-2S]-[ferredoxin] + NADP(+) + H(+) = 2 oxidized [2Fe-2S]-[ferredoxin] + NADPH</text>
        <dbReference type="Rhea" id="RHEA:20125"/>
        <dbReference type="Rhea" id="RHEA-COMP:10000"/>
        <dbReference type="Rhea" id="RHEA-COMP:10001"/>
        <dbReference type="ChEBI" id="CHEBI:15378"/>
        <dbReference type="ChEBI" id="CHEBI:33737"/>
        <dbReference type="ChEBI" id="CHEBI:33738"/>
        <dbReference type="ChEBI" id="CHEBI:57783"/>
        <dbReference type="ChEBI" id="CHEBI:58349"/>
        <dbReference type="EC" id="1.18.1.2"/>
    </reaction>
</comment>
<comment type="cofactor">
    <cofactor evidence="1">
        <name>FAD</name>
        <dbReference type="ChEBI" id="CHEBI:57692"/>
    </cofactor>
    <text evidence="1">Binds 1 FAD per subunit.</text>
</comment>
<comment type="subunit">
    <text evidence="1">Homodimer.</text>
</comment>
<comment type="similarity">
    <text evidence="1">Belongs to the ferredoxin--NADP reductase type 2 family.</text>
</comment>
<keyword id="KW-0274">FAD</keyword>
<keyword id="KW-0285">Flavoprotein</keyword>
<keyword id="KW-0521">NADP</keyword>
<keyword id="KW-0560">Oxidoreductase</keyword>
<accession>B3QJ15</accession>
<dbReference type="EC" id="1.18.1.2" evidence="1"/>
<dbReference type="EMBL" id="CP001096">
    <property type="protein sequence ID" value="ACF02971.1"/>
    <property type="molecule type" value="Genomic_DNA"/>
</dbReference>
<dbReference type="RefSeq" id="WP_011159490.1">
    <property type="nucleotide sequence ID" value="NC_011004.1"/>
</dbReference>
<dbReference type="SMR" id="B3QJ15"/>
<dbReference type="KEGG" id="rpt:Rpal_4475"/>
<dbReference type="HOGENOM" id="CLU_031864_5_5_5"/>
<dbReference type="OrthoDB" id="9806179at2"/>
<dbReference type="Proteomes" id="UP000001725">
    <property type="component" value="Chromosome"/>
</dbReference>
<dbReference type="GO" id="GO:0004324">
    <property type="term" value="F:ferredoxin-NADP+ reductase activity"/>
    <property type="evidence" value="ECO:0007669"/>
    <property type="project" value="UniProtKB-UniRule"/>
</dbReference>
<dbReference type="GO" id="GO:0050660">
    <property type="term" value="F:flavin adenine dinucleotide binding"/>
    <property type="evidence" value="ECO:0007669"/>
    <property type="project" value="UniProtKB-UniRule"/>
</dbReference>
<dbReference type="GO" id="GO:0050661">
    <property type="term" value="F:NADP binding"/>
    <property type="evidence" value="ECO:0007669"/>
    <property type="project" value="UniProtKB-UniRule"/>
</dbReference>
<dbReference type="Gene3D" id="3.50.50.60">
    <property type="entry name" value="FAD/NAD(P)-binding domain"/>
    <property type="match status" value="2"/>
</dbReference>
<dbReference type="HAMAP" id="MF_01685">
    <property type="entry name" value="FENR2"/>
    <property type="match status" value="1"/>
</dbReference>
<dbReference type="InterPro" id="IPR036188">
    <property type="entry name" value="FAD/NAD-bd_sf"/>
</dbReference>
<dbReference type="InterPro" id="IPR023753">
    <property type="entry name" value="FAD/NAD-binding_dom"/>
</dbReference>
<dbReference type="InterPro" id="IPR022890">
    <property type="entry name" value="Fd--NADP_Rdtase_type_2"/>
</dbReference>
<dbReference type="InterPro" id="IPR050097">
    <property type="entry name" value="Ferredoxin-NADP_redctase_2"/>
</dbReference>
<dbReference type="PANTHER" id="PTHR48105">
    <property type="entry name" value="THIOREDOXIN REDUCTASE 1-RELATED-RELATED"/>
    <property type="match status" value="1"/>
</dbReference>
<dbReference type="Pfam" id="PF07992">
    <property type="entry name" value="Pyr_redox_2"/>
    <property type="match status" value="1"/>
</dbReference>
<dbReference type="PRINTS" id="PR00368">
    <property type="entry name" value="FADPNR"/>
</dbReference>
<dbReference type="PRINTS" id="PR00469">
    <property type="entry name" value="PNDRDTASEII"/>
</dbReference>
<dbReference type="SUPFAM" id="SSF51905">
    <property type="entry name" value="FAD/NAD(P)-binding domain"/>
    <property type="match status" value="1"/>
</dbReference>
<feature type="chain" id="PRO_0000364918" description="Ferredoxin--NADP reductase">
    <location>
        <begin position="1"/>
        <end position="342"/>
    </location>
</feature>
<feature type="binding site" evidence="1">
    <location>
        <position position="17"/>
    </location>
    <ligand>
        <name>FAD</name>
        <dbReference type="ChEBI" id="CHEBI:57692"/>
    </ligand>
</feature>
<feature type="binding site" evidence="1">
    <location>
        <position position="36"/>
    </location>
    <ligand>
        <name>FAD</name>
        <dbReference type="ChEBI" id="CHEBI:57692"/>
    </ligand>
</feature>
<feature type="binding site" evidence="1">
    <location>
        <position position="44"/>
    </location>
    <ligand>
        <name>FAD</name>
        <dbReference type="ChEBI" id="CHEBI:57692"/>
    </ligand>
</feature>
<feature type="binding site" evidence="1">
    <location>
        <position position="49"/>
    </location>
    <ligand>
        <name>FAD</name>
        <dbReference type="ChEBI" id="CHEBI:57692"/>
    </ligand>
</feature>
<feature type="binding site" evidence="1">
    <location>
        <position position="89"/>
    </location>
    <ligand>
        <name>FAD</name>
        <dbReference type="ChEBI" id="CHEBI:57692"/>
    </ligand>
</feature>
<feature type="binding site" evidence="1">
    <location>
        <position position="124"/>
    </location>
    <ligand>
        <name>FAD</name>
        <dbReference type="ChEBI" id="CHEBI:57692"/>
    </ligand>
</feature>
<feature type="binding site" evidence="1">
    <location>
        <position position="289"/>
    </location>
    <ligand>
        <name>FAD</name>
        <dbReference type="ChEBI" id="CHEBI:57692"/>
    </ligand>
</feature>
<feature type="binding site" evidence="1">
    <location>
        <position position="330"/>
    </location>
    <ligand>
        <name>FAD</name>
        <dbReference type="ChEBI" id="CHEBI:57692"/>
    </ligand>
</feature>
<evidence type="ECO:0000255" key="1">
    <source>
        <dbReference type="HAMAP-Rule" id="MF_01685"/>
    </source>
</evidence>
<organism>
    <name type="scientific">Rhodopseudomonas palustris (strain TIE-1)</name>
    <dbReference type="NCBI Taxonomy" id="395960"/>
    <lineage>
        <taxon>Bacteria</taxon>
        <taxon>Pseudomonadati</taxon>
        <taxon>Pseudomonadota</taxon>
        <taxon>Alphaproteobacteria</taxon>
        <taxon>Hyphomicrobiales</taxon>
        <taxon>Nitrobacteraceae</taxon>
        <taxon>Rhodopseudomonas</taxon>
    </lineage>
</organism>
<reference key="1">
    <citation type="submission" date="2008-05" db="EMBL/GenBank/DDBJ databases">
        <title>Complete sequence of Rhodopseudomonas palustris TIE-1.</title>
        <authorList>
            <consortium name="US DOE Joint Genome Institute"/>
            <person name="Lucas S."/>
            <person name="Copeland A."/>
            <person name="Lapidus A."/>
            <person name="Glavina del Rio T."/>
            <person name="Dalin E."/>
            <person name="Tice H."/>
            <person name="Pitluck S."/>
            <person name="Chain P."/>
            <person name="Malfatti S."/>
            <person name="Shin M."/>
            <person name="Vergez L."/>
            <person name="Lang D."/>
            <person name="Schmutz J."/>
            <person name="Larimer F."/>
            <person name="Land M."/>
            <person name="Hauser L."/>
            <person name="Kyrpides N."/>
            <person name="Mikhailova N."/>
            <person name="Emerson D."/>
            <person name="Newman D.K."/>
            <person name="Roden E."/>
            <person name="Richardson P."/>
        </authorList>
    </citation>
    <scope>NUCLEOTIDE SEQUENCE [LARGE SCALE GENOMIC DNA]</scope>
    <source>
        <strain>TIE-1</strain>
    </source>
</reference>
<proteinExistence type="inferred from homology"/>
<gene>
    <name type="ordered locus">Rpal_4475</name>
</gene>
<sequence length="342" mass="37017">MTETIKTDVLIVGAGPCGLFAVFELGLLDVKAHLVDILDKVGGQCAELYPEKPIYDIPGIPMVTGHGLTEALMEQIKPFNPTFHLSEMVENVEKIGDPGFRVTTNAGKVFECTVLVVAAGGGSFLPKRPPVPGVEAYEGTSVHYAVRKMEDFRGKDILIVGGGDSALDWTLNLNPIAKSMTLVHRRDDFRGAPHSVEQMRQLVASGKLDLKIGQITELQGDNGQLTGATVKLNDNTTSQIKCDAMLPFFGLTMKLGPVANWGLDLENNLIPVDTGTFETNVPGIFAIGDINTYPGKLKLILSGFHEGALMAQKAVKYVYPDKRVVFQYTTSSTNLQKKLGVN</sequence>
<name>FENR_RHOPT</name>